<feature type="transit peptide" description="Chloroplast" evidence="1">
    <location>
        <begin position="1"/>
        <end position="71"/>
    </location>
</feature>
<feature type="chain" id="PRO_0000442182" description="Protein FLOURY ENDOSPERM 6, chloroplastic" evidence="1">
    <location>
        <begin position="72"/>
        <end position="529"/>
    </location>
</feature>
<feature type="region of interest" description="Disordered" evidence="2">
    <location>
        <begin position="1"/>
        <end position="22"/>
    </location>
</feature>
<feature type="region of interest" description="Disordered" evidence="2">
    <location>
        <begin position="39"/>
        <end position="77"/>
    </location>
</feature>
<feature type="region of interest" description="Disordered" evidence="2">
    <location>
        <begin position="166"/>
        <end position="275"/>
    </location>
</feature>
<feature type="coiled-coil region" evidence="1">
    <location>
        <begin position="400"/>
        <end position="452"/>
    </location>
</feature>
<feature type="compositionally biased region" description="Pro residues" evidence="2">
    <location>
        <begin position="9"/>
        <end position="18"/>
    </location>
</feature>
<feature type="compositionally biased region" description="Basic residues" evidence="2">
    <location>
        <begin position="41"/>
        <end position="57"/>
    </location>
</feature>
<feature type="sequence conflict" description="In Ref. 5; EEE59721." evidence="7" ref="5">
    <original>T</original>
    <variation>Y</variation>
    <location>
        <position position="11"/>
    </location>
</feature>
<feature type="sequence conflict" description="In Ref. 5; EEE59721." evidence="7" ref="5">
    <original>E</original>
    <variation>K</variation>
    <location>
        <position position="79"/>
    </location>
</feature>
<reference key="1">
    <citation type="journal article" date="2005" name="Genome Res.">
        <title>Sequence, annotation, and analysis of synteny between rice chromosome 3 and diverged grass species.</title>
        <authorList>
            <consortium name="The rice chromosome 3 sequencing consortium"/>
            <person name="Buell C.R."/>
            <person name="Yuan Q."/>
            <person name="Ouyang S."/>
            <person name="Liu J."/>
            <person name="Zhu W."/>
            <person name="Wang A."/>
            <person name="Maiti R."/>
            <person name="Haas B."/>
            <person name="Wortman J."/>
            <person name="Pertea M."/>
            <person name="Jones K.M."/>
            <person name="Kim M."/>
            <person name="Overton L."/>
            <person name="Tsitrin T."/>
            <person name="Fadrosh D."/>
            <person name="Bera J."/>
            <person name="Weaver B."/>
            <person name="Jin S."/>
            <person name="Johri S."/>
            <person name="Reardon M."/>
            <person name="Webb K."/>
            <person name="Hill J."/>
            <person name="Moffat K."/>
            <person name="Tallon L."/>
            <person name="Van Aken S."/>
            <person name="Lewis M."/>
            <person name="Utterback T."/>
            <person name="Feldblyum T."/>
            <person name="Zismann V."/>
            <person name="Iobst S."/>
            <person name="Hsiao J."/>
            <person name="de Vazeille A.R."/>
            <person name="Salzberg S.L."/>
            <person name="White O."/>
            <person name="Fraser C.M."/>
            <person name="Yu Y."/>
            <person name="Kim H."/>
            <person name="Rambo T."/>
            <person name="Currie J."/>
            <person name="Collura K."/>
            <person name="Kernodle-Thompson S."/>
            <person name="Wei F."/>
            <person name="Kudrna K."/>
            <person name="Ammiraju J.S.S."/>
            <person name="Luo M."/>
            <person name="Goicoechea J.L."/>
            <person name="Wing R.A."/>
            <person name="Henry D."/>
            <person name="Oates R."/>
            <person name="Palmer M."/>
            <person name="Pries G."/>
            <person name="Saski C."/>
            <person name="Simmons J."/>
            <person name="Soderlund C."/>
            <person name="Nelson W."/>
            <person name="de la Bastide M."/>
            <person name="Spiegel L."/>
            <person name="Nascimento L."/>
            <person name="Huang E."/>
            <person name="Preston R."/>
            <person name="Zutavern T."/>
            <person name="Palmer L."/>
            <person name="O'Shaughnessy A."/>
            <person name="Dike S."/>
            <person name="McCombie W.R."/>
            <person name="Minx P."/>
            <person name="Cordum H."/>
            <person name="Wilson R."/>
            <person name="Jin W."/>
            <person name="Lee H.R."/>
            <person name="Jiang J."/>
            <person name="Jackson S."/>
        </authorList>
    </citation>
    <scope>NUCLEOTIDE SEQUENCE [LARGE SCALE GENOMIC DNA]</scope>
    <source>
        <strain>cv. Nipponbare</strain>
    </source>
</reference>
<reference key="2">
    <citation type="journal article" date="2005" name="Nature">
        <title>The map-based sequence of the rice genome.</title>
        <authorList>
            <consortium name="International rice genome sequencing project (IRGSP)"/>
        </authorList>
    </citation>
    <scope>NUCLEOTIDE SEQUENCE [LARGE SCALE GENOMIC DNA]</scope>
    <source>
        <strain>cv. Nipponbare</strain>
    </source>
</reference>
<reference key="3">
    <citation type="journal article" date="2008" name="Nucleic Acids Res.">
        <title>The rice annotation project database (RAP-DB): 2008 update.</title>
        <authorList>
            <consortium name="The rice annotation project (RAP)"/>
        </authorList>
    </citation>
    <scope>GENOME REANNOTATION</scope>
    <source>
        <strain>cv. Nipponbare</strain>
    </source>
</reference>
<reference key="4">
    <citation type="journal article" date="2013" name="Rice">
        <title>Improvement of the Oryza sativa Nipponbare reference genome using next generation sequence and optical map data.</title>
        <authorList>
            <person name="Kawahara Y."/>
            <person name="de la Bastide M."/>
            <person name="Hamilton J.P."/>
            <person name="Kanamori H."/>
            <person name="McCombie W.R."/>
            <person name="Ouyang S."/>
            <person name="Schwartz D.C."/>
            <person name="Tanaka T."/>
            <person name="Wu J."/>
            <person name="Zhou S."/>
            <person name="Childs K.L."/>
            <person name="Davidson R.M."/>
            <person name="Lin H."/>
            <person name="Quesada-Ocampo L."/>
            <person name="Vaillancourt B."/>
            <person name="Sakai H."/>
            <person name="Lee S.S."/>
            <person name="Kim J."/>
            <person name="Numa H."/>
            <person name="Itoh T."/>
            <person name="Buell C.R."/>
            <person name="Matsumoto T."/>
        </authorList>
    </citation>
    <scope>GENOME REANNOTATION</scope>
    <source>
        <strain>cv. Nipponbare</strain>
    </source>
</reference>
<reference key="5">
    <citation type="journal article" date="2005" name="PLoS Biol.">
        <title>The genomes of Oryza sativa: a history of duplications.</title>
        <authorList>
            <person name="Yu J."/>
            <person name="Wang J."/>
            <person name="Lin W."/>
            <person name="Li S."/>
            <person name="Li H."/>
            <person name="Zhou J."/>
            <person name="Ni P."/>
            <person name="Dong W."/>
            <person name="Hu S."/>
            <person name="Zeng C."/>
            <person name="Zhang J."/>
            <person name="Zhang Y."/>
            <person name="Li R."/>
            <person name="Xu Z."/>
            <person name="Li S."/>
            <person name="Li X."/>
            <person name="Zheng H."/>
            <person name="Cong L."/>
            <person name="Lin L."/>
            <person name="Yin J."/>
            <person name="Geng J."/>
            <person name="Li G."/>
            <person name="Shi J."/>
            <person name="Liu J."/>
            <person name="Lv H."/>
            <person name="Li J."/>
            <person name="Wang J."/>
            <person name="Deng Y."/>
            <person name="Ran L."/>
            <person name="Shi X."/>
            <person name="Wang X."/>
            <person name="Wu Q."/>
            <person name="Li C."/>
            <person name="Ren X."/>
            <person name="Wang J."/>
            <person name="Wang X."/>
            <person name="Li D."/>
            <person name="Liu D."/>
            <person name="Zhang X."/>
            <person name="Ji Z."/>
            <person name="Zhao W."/>
            <person name="Sun Y."/>
            <person name="Zhang Z."/>
            <person name="Bao J."/>
            <person name="Han Y."/>
            <person name="Dong L."/>
            <person name="Ji J."/>
            <person name="Chen P."/>
            <person name="Wu S."/>
            <person name="Liu J."/>
            <person name="Xiao Y."/>
            <person name="Bu D."/>
            <person name="Tan J."/>
            <person name="Yang L."/>
            <person name="Ye C."/>
            <person name="Zhang J."/>
            <person name="Xu J."/>
            <person name="Zhou Y."/>
            <person name="Yu Y."/>
            <person name="Zhang B."/>
            <person name="Zhuang S."/>
            <person name="Wei H."/>
            <person name="Liu B."/>
            <person name="Lei M."/>
            <person name="Yu H."/>
            <person name="Li Y."/>
            <person name="Xu H."/>
            <person name="Wei S."/>
            <person name="He X."/>
            <person name="Fang L."/>
            <person name="Zhang Z."/>
            <person name="Zhang Y."/>
            <person name="Huang X."/>
            <person name="Su Z."/>
            <person name="Tong W."/>
            <person name="Li J."/>
            <person name="Tong Z."/>
            <person name="Li S."/>
            <person name="Ye J."/>
            <person name="Wang L."/>
            <person name="Fang L."/>
            <person name="Lei T."/>
            <person name="Chen C.-S."/>
            <person name="Chen H.-C."/>
            <person name="Xu Z."/>
            <person name="Li H."/>
            <person name="Huang H."/>
            <person name="Zhang F."/>
            <person name="Xu H."/>
            <person name="Li N."/>
            <person name="Zhao C."/>
            <person name="Li S."/>
            <person name="Dong L."/>
            <person name="Huang Y."/>
            <person name="Li L."/>
            <person name="Xi Y."/>
            <person name="Qi Q."/>
            <person name="Li W."/>
            <person name="Zhang B."/>
            <person name="Hu W."/>
            <person name="Zhang Y."/>
            <person name="Tian X."/>
            <person name="Jiao Y."/>
            <person name="Liang X."/>
            <person name="Jin J."/>
            <person name="Gao L."/>
            <person name="Zheng W."/>
            <person name="Hao B."/>
            <person name="Liu S.-M."/>
            <person name="Wang W."/>
            <person name="Yuan L."/>
            <person name="Cao M."/>
            <person name="McDermott J."/>
            <person name="Samudrala R."/>
            <person name="Wang J."/>
            <person name="Wong G.K.-S."/>
            <person name="Yang H."/>
        </authorList>
    </citation>
    <scope>NUCLEOTIDE SEQUENCE [LARGE SCALE GENOMIC DNA]</scope>
    <source>
        <strain>cv. Nipponbare</strain>
    </source>
</reference>
<reference key="6">
    <citation type="submission" date="2007-09" db="EMBL/GenBank/DDBJ databases">
        <title>Oryza sativa full length cDNA.</title>
        <authorList>
            <consortium name="The rice full-length cDNA consortium"/>
        </authorList>
    </citation>
    <scope>NUCLEOTIDE SEQUENCE [LARGE SCALE MRNA]</scope>
    <source>
        <strain>cv. Nipponbare</strain>
    </source>
</reference>
<reference key="7">
    <citation type="journal article" date="2009" name="Proc. Natl. Acad. Sci. U.S.A.">
        <title>A homolog of human ski-interacting protein in rice positively regulates cell viability and stress tolerance.</title>
        <authorList>
            <person name="Hou X."/>
            <person name="Xie K."/>
            <person name="Yao J."/>
            <person name="Qi Z."/>
            <person name="Xiong L."/>
        </authorList>
    </citation>
    <scope>INTERACTION WITH SKIPA</scope>
</reference>
<reference key="8">
    <citation type="journal article" date="2014" name="Plant J.">
        <title>FLOURY ENDOSPERM6 encodes a CBM48 domain-containing protein involved in compound granule formation and starch synthesis in rice endosperm.</title>
        <authorList>
            <person name="Peng C."/>
            <person name="Wang Y."/>
            <person name="Liu F."/>
            <person name="Ren Y."/>
            <person name="Zhou K."/>
            <person name="Lv J."/>
            <person name="Zheng M."/>
            <person name="Zhao S."/>
            <person name="Zhang L."/>
            <person name="Wang C."/>
            <person name="Jiang L."/>
            <person name="Zhang X."/>
            <person name="Guo X."/>
            <person name="Bao Y."/>
            <person name="Wan J."/>
        </authorList>
    </citation>
    <scope>FUNCTION</scope>
    <scope>INTERACTION WITH ISA1</scope>
    <scope>SUBCELLULAR LOCATION</scope>
    <scope>DOMAIN CBM</scope>
    <scope>TISSUE SPECIFICITY</scope>
    <scope>DISRUPTION PHENOTYPE</scope>
</reference>
<gene>
    <name evidence="6" type="primary">FLO6</name>
    <name evidence="5" type="synonym">SIP4</name>
    <name evidence="11" type="ordered locus">Os03g0686900</name>
    <name evidence="10" type="ordered locus">LOC_Os03g48170</name>
    <name evidence="12" type="ORF">OsJ_12152</name>
    <name evidence="9" type="ORF">OSJNBb0024N19.10</name>
</gene>
<protein>
    <recommendedName>
        <fullName evidence="6">Protein FLOURY ENDOSPERM 6, chloroplastic</fullName>
    </recommendedName>
    <alternativeName>
        <fullName evidence="5">SKIPa-interacting protein 4</fullName>
    </alternativeName>
</protein>
<organism>
    <name type="scientific">Oryza sativa subsp. japonica</name>
    <name type="common">Rice</name>
    <dbReference type="NCBI Taxonomy" id="39947"/>
    <lineage>
        <taxon>Eukaryota</taxon>
        <taxon>Viridiplantae</taxon>
        <taxon>Streptophyta</taxon>
        <taxon>Embryophyta</taxon>
        <taxon>Tracheophyta</taxon>
        <taxon>Spermatophyta</taxon>
        <taxon>Magnoliopsida</taxon>
        <taxon>Liliopsida</taxon>
        <taxon>Poales</taxon>
        <taxon>Poaceae</taxon>
        <taxon>BOP clade</taxon>
        <taxon>Oryzoideae</taxon>
        <taxon>Oryzeae</taxon>
        <taxon>Oryzinae</taxon>
        <taxon>Oryza</taxon>
        <taxon>Oryza sativa</taxon>
    </lineage>
</organism>
<proteinExistence type="evidence at protein level"/>
<comment type="function">
    <text evidence="4">Involved in compound starch granule formation and starch synthesis in endosperm. May act as a regulatory scaffolding protein and affect starch synthesis and compound starch granule formation through direct interaction with isoamylase 1 (ISA1). Binds starch, amylopectin and amylose through its C-terminal carbohydrate-binding domain (CBM) in vitro.</text>
</comment>
<comment type="subunit">
    <text evidence="3 4">Interacts with SKIPA (PubMed:19339499). Interacts with ISA1 (PubMed:24456533).</text>
</comment>
<comment type="subcellular location">
    <subcellularLocation>
        <location evidence="4">Plastid</location>
        <location evidence="4">Chloroplast</location>
    </subcellularLocation>
    <text evidence="4">Localizes to granule-like structures in chloroplasts.</text>
</comment>
<comment type="tissue specificity">
    <text evidence="4">Expressed in leaves, stems and panicles. Expressed at lower levels in roots and developing seeds.</text>
</comment>
<comment type="domain">
    <text evidence="8">Contains a C-terminal (448-529) carbohydrate-binding domain (CBM).</text>
</comment>
<comment type="disruption phenotype">
    <text evidence="4">Slight reduction in plant height. Reduced size of the endosperm, reduced starch content of the endosperm and floury (opaque) endosperm.</text>
</comment>
<comment type="sequence caution" evidence="7">
    <conflict type="erroneous gene model prediction">
        <sequence resource="EMBL-CDS" id="AAT85062"/>
    </conflict>
</comment>
<comment type="sequence caution" evidence="7">
    <conflict type="erroneous gene model prediction">
        <sequence resource="EMBL-CDS" id="BAF12850"/>
    </conflict>
</comment>
<evidence type="ECO:0000255" key="1"/>
<evidence type="ECO:0000256" key="2">
    <source>
        <dbReference type="SAM" id="MobiDB-lite"/>
    </source>
</evidence>
<evidence type="ECO:0000269" key="3">
    <source>
    </source>
</evidence>
<evidence type="ECO:0000269" key="4">
    <source>
    </source>
</evidence>
<evidence type="ECO:0000303" key="5">
    <source>
    </source>
</evidence>
<evidence type="ECO:0000303" key="6">
    <source>
    </source>
</evidence>
<evidence type="ECO:0000305" key="7"/>
<evidence type="ECO:0000305" key="8">
    <source>
    </source>
</evidence>
<evidence type="ECO:0000312" key="9">
    <source>
        <dbReference type="EMBL" id="AAT85062.1"/>
    </source>
</evidence>
<evidence type="ECO:0000312" key="10">
    <source>
        <dbReference type="EMBL" id="ABF98262.1"/>
    </source>
</evidence>
<evidence type="ECO:0000312" key="11">
    <source>
        <dbReference type="EMBL" id="BAS85812.1"/>
    </source>
</evidence>
<evidence type="ECO:0000312" key="12">
    <source>
        <dbReference type="EMBL" id="EEE59721.1"/>
    </source>
</evidence>
<accession>Q10F03</accession>
<accession>B9FAN7</accession>
<accession>Q0DPI8</accession>
<accession>Q6AVV5</accession>
<dbReference type="EMBL" id="AC092779">
    <property type="protein sequence ID" value="AAT85062.1"/>
    <property type="status" value="ALT_SEQ"/>
    <property type="molecule type" value="Genomic_DNA"/>
</dbReference>
<dbReference type="EMBL" id="DP000009">
    <property type="protein sequence ID" value="ABF98262.1"/>
    <property type="molecule type" value="Genomic_DNA"/>
</dbReference>
<dbReference type="EMBL" id="AP008209">
    <property type="protein sequence ID" value="BAF12850.2"/>
    <property type="status" value="ALT_SEQ"/>
    <property type="molecule type" value="Genomic_DNA"/>
</dbReference>
<dbReference type="EMBL" id="AP014959">
    <property type="protein sequence ID" value="BAS85812.1"/>
    <property type="molecule type" value="Genomic_DNA"/>
</dbReference>
<dbReference type="EMBL" id="CM000140">
    <property type="protein sequence ID" value="EEE59721.1"/>
    <property type="molecule type" value="Genomic_DNA"/>
</dbReference>
<dbReference type="EMBL" id="AK287681">
    <property type="status" value="NOT_ANNOTATED_CDS"/>
    <property type="molecule type" value="mRNA"/>
</dbReference>
<dbReference type="RefSeq" id="XP_015630691.1">
    <property type="nucleotide sequence ID" value="XM_015775205.1"/>
</dbReference>
<dbReference type="FunCoup" id="Q10F03">
    <property type="interactions" value="2295"/>
</dbReference>
<dbReference type="STRING" id="39947.Q10F03"/>
<dbReference type="CAZy" id="CBM48">
    <property type="family name" value="Carbohydrate-Binding Module Family 48"/>
</dbReference>
<dbReference type="PaxDb" id="39947-Q10F03"/>
<dbReference type="EnsemblPlants" id="Os03t0686900-01">
    <property type="protein sequence ID" value="Os03t0686900-01"/>
    <property type="gene ID" value="Os03g0686900"/>
</dbReference>
<dbReference type="Gramene" id="Os03t0686900-01">
    <property type="protein sequence ID" value="Os03t0686900-01"/>
    <property type="gene ID" value="Os03g0686900"/>
</dbReference>
<dbReference type="KEGG" id="dosa:Os03g0686900"/>
<dbReference type="eggNOG" id="KOG1616">
    <property type="taxonomic scope" value="Eukaryota"/>
</dbReference>
<dbReference type="HOGENOM" id="CLU_020708_0_0_1"/>
<dbReference type="InParanoid" id="Q10F03"/>
<dbReference type="OMA" id="RRCKDWD"/>
<dbReference type="OrthoDB" id="531008at2759"/>
<dbReference type="Proteomes" id="UP000000763">
    <property type="component" value="Chromosome 3"/>
</dbReference>
<dbReference type="Proteomes" id="UP000007752">
    <property type="component" value="Chromosome 3"/>
</dbReference>
<dbReference type="Proteomes" id="UP000059680">
    <property type="component" value="Chromosome 3"/>
</dbReference>
<dbReference type="GO" id="GO:0009507">
    <property type="term" value="C:chloroplast"/>
    <property type="evidence" value="ECO:0000314"/>
    <property type="project" value="UniProtKB"/>
</dbReference>
<dbReference type="GO" id="GO:2001066">
    <property type="term" value="F:amylopectin binding"/>
    <property type="evidence" value="ECO:0000314"/>
    <property type="project" value="UniProtKB"/>
</dbReference>
<dbReference type="GO" id="GO:2001070">
    <property type="term" value="F:starch binding"/>
    <property type="evidence" value="ECO:0000314"/>
    <property type="project" value="UniProtKB"/>
</dbReference>
<dbReference type="GO" id="GO:2000014">
    <property type="term" value="P:regulation of endosperm development"/>
    <property type="evidence" value="ECO:0000315"/>
    <property type="project" value="UniProtKB"/>
</dbReference>
<dbReference type="GO" id="GO:0019252">
    <property type="term" value="P:starch biosynthetic process"/>
    <property type="evidence" value="ECO:0000315"/>
    <property type="project" value="UniProtKB"/>
</dbReference>
<dbReference type="CDD" id="cd02859">
    <property type="entry name" value="E_set_AMPKbeta_like_N"/>
    <property type="match status" value="1"/>
</dbReference>
<dbReference type="FunFam" id="2.60.40.10:FF:001513">
    <property type="entry name" value="Protein PTST, chloroplastic"/>
    <property type="match status" value="1"/>
</dbReference>
<dbReference type="Gene3D" id="2.60.40.10">
    <property type="entry name" value="Immunoglobulins"/>
    <property type="match status" value="1"/>
</dbReference>
<dbReference type="InterPro" id="IPR032640">
    <property type="entry name" value="AMPK1_CBM"/>
</dbReference>
<dbReference type="InterPro" id="IPR013783">
    <property type="entry name" value="Ig-like_fold"/>
</dbReference>
<dbReference type="InterPro" id="IPR014756">
    <property type="entry name" value="Ig_E-set"/>
</dbReference>
<dbReference type="PANTHER" id="PTHR47434:SF1">
    <property type="entry name" value="PROTEIN PTST HOMOLOG 2, CHLOROPLASTIC"/>
    <property type="match status" value="1"/>
</dbReference>
<dbReference type="PANTHER" id="PTHR47434">
    <property type="entry name" value="PROTEIN PTST HOMOLOG 3, CHLOROPLASTIC"/>
    <property type="match status" value="1"/>
</dbReference>
<dbReference type="Pfam" id="PF16561">
    <property type="entry name" value="AMPK1_CBM"/>
    <property type="match status" value="1"/>
</dbReference>
<dbReference type="SUPFAM" id="SSF81296">
    <property type="entry name" value="E set domains"/>
    <property type="match status" value="1"/>
</dbReference>
<keyword id="KW-0150">Chloroplast</keyword>
<keyword id="KW-0175">Coiled coil</keyword>
<keyword id="KW-0934">Plastid</keyword>
<keyword id="KW-1185">Reference proteome</keyword>
<keyword id="KW-0809">Transit peptide</keyword>
<name>FLO6_ORYSJ</name>
<sequence length="529" mass="57988">MLPLLLPLPVTPPPPLPSPTLTLAPASAPRRRLVLLAAAAPHHHHHHRRRRVYRRQRAAPTQTRAPRRTLSASNAARGEEDLEEAIYEFMRRSDKPGAFPTRAELVAAGRADLAAAVDACGGWLSLGWSSGGAEAGRASSSVGVHPDYPPEAGAAAAAGGASDLAQGAVWASSREAEASPSGRQPETEEEETETKFGTGLDGMLTRLQRERERVRPPLPRSSDGAGGERDNVALMGQSGAPSHSATGGRYTPKVPDNGNIHSYHPQNGALEHNKSSKSLTNDAWRTWSLDKGGFSDFQAAEIHSTNSRKSFRHDGLDILAQDDVHGPSNGVAVHDYDINDVDSERDDIHARLQNLELDLTAALHTLRSRFDKVISDMSEGDGAKAPNGLSDDWEFEETKVMQAQEELRSIRAKIAVLEGKMALEIIEKNKIIEEKQRRLDEAEKALSELRTVYIVWSNPASEVLLTGSFDGWTSQRRMERSERGTFSLNLRLYPGRYEIKFIVDGVWRNDPLRPLVSNNGHENNLLTVT</sequence>